<name>RAVA_SHIBS</name>
<evidence type="ECO:0000255" key="1">
    <source>
        <dbReference type="HAMAP-Rule" id="MF_01625"/>
    </source>
</evidence>
<evidence type="ECO:0000305" key="2"/>
<dbReference type="EC" id="3.6.1.-" evidence="1"/>
<dbReference type="EMBL" id="CP000036">
    <property type="protein sequence ID" value="ABB68213.1"/>
    <property type="status" value="ALT_INIT"/>
    <property type="molecule type" value="Genomic_DNA"/>
</dbReference>
<dbReference type="RefSeq" id="WP_005009183.1">
    <property type="nucleotide sequence ID" value="NC_007613.1"/>
</dbReference>
<dbReference type="SMR" id="Q31UP5"/>
<dbReference type="KEGG" id="sbo:SBO_3741"/>
<dbReference type="HOGENOM" id="CLU_018678_1_0_6"/>
<dbReference type="Proteomes" id="UP000007067">
    <property type="component" value="Chromosome"/>
</dbReference>
<dbReference type="GO" id="GO:0005737">
    <property type="term" value="C:cytoplasm"/>
    <property type="evidence" value="ECO:0007669"/>
    <property type="project" value="UniProtKB-SubCell"/>
</dbReference>
<dbReference type="GO" id="GO:0005524">
    <property type="term" value="F:ATP binding"/>
    <property type="evidence" value="ECO:0007669"/>
    <property type="project" value="UniProtKB-KW"/>
</dbReference>
<dbReference type="GO" id="GO:0016887">
    <property type="term" value="F:ATP hydrolysis activity"/>
    <property type="evidence" value="ECO:0007669"/>
    <property type="project" value="UniProtKB-UniRule"/>
</dbReference>
<dbReference type="CDD" id="cd00009">
    <property type="entry name" value="AAA"/>
    <property type="match status" value="1"/>
</dbReference>
<dbReference type="FunFam" id="3.40.50.300:FF:000410">
    <property type="entry name" value="ATPase RavA"/>
    <property type="match status" value="1"/>
</dbReference>
<dbReference type="Gene3D" id="1.20.58.1510">
    <property type="match status" value="1"/>
</dbReference>
<dbReference type="Gene3D" id="2.40.128.430">
    <property type="match status" value="1"/>
</dbReference>
<dbReference type="Gene3D" id="3.40.50.300">
    <property type="entry name" value="P-loop containing nucleotide triphosphate hydrolases"/>
    <property type="match status" value="1"/>
</dbReference>
<dbReference type="HAMAP" id="MF_01625">
    <property type="entry name" value="ATPase_RavA"/>
    <property type="match status" value="1"/>
</dbReference>
<dbReference type="InterPro" id="IPR003593">
    <property type="entry name" value="AAA+_ATPase"/>
</dbReference>
<dbReference type="InterPro" id="IPR023671">
    <property type="entry name" value="ATPase_RavA"/>
</dbReference>
<dbReference type="InterPro" id="IPR022547">
    <property type="entry name" value="ATPase_RavA_C"/>
</dbReference>
<dbReference type="InterPro" id="IPR045427">
    <property type="entry name" value="MoxR"/>
</dbReference>
<dbReference type="InterPro" id="IPR027417">
    <property type="entry name" value="P-loop_NTPase"/>
</dbReference>
<dbReference type="InterPro" id="IPR041538">
    <property type="entry name" value="RavA-like_AAA_lid"/>
</dbReference>
<dbReference type="InterPro" id="IPR050513">
    <property type="entry name" value="RavA_ATPases"/>
</dbReference>
<dbReference type="InterPro" id="IPR046898">
    <property type="entry name" value="RavA_LARA_dom"/>
</dbReference>
<dbReference type="InterPro" id="IPR046932">
    <property type="entry name" value="RavA_LARA_sf"/>
</dbReference>
<dbReference type="NCBIfam" id="NF010054">
    <property type="entry name" value="PRK13531.1"/>
    <property type="match status" value="1"/>
</dbReference>
<dbReference type="PANTHER" id="PTHR32204">
    <property type="entry name" value="ATPASE RAVA"/>
    <property type="match status" value="1"/>
</dbReference>
<dbReference type="PANTHER" id="PTHR32204:SF0">
    <property type="entry name" value="ATPASE RAVA"/>
    <property type="match status" value="1"/>
</dbReference>
<dbReference type="Pfam" id="PF17868">
    <property type="entry name" value="AAA_lid_8"/>
    <property type="match status" value="1"/>
</dbReference>
<dbReference type="Pfam" id="PF12592">
    <property type="entry name" value="ATPase_RavA_C"/>
    <property type="match status" value="1"/>
</dbReference>
<dbReference type="Pfam" id="PF20030">
    <property type="entry name" value="bpMoxR"/>
    <property type="match status" value="1"/>
</dbReference>
<dbReference type="Pfam" id="PF20265">
    <property type="entry name" value="LARA_dom"/>
    <property type="match status" value="1"/>
</dbReference>
<dbReference type="SMART" id="SM00382">
    <property type="entry name" value="AAA"/>
    <property type="match status" value="1"/>
</dbReference>
<dbReference type="SUPFAM" id="SSF52540">
    <property type="entry name" value="P-loop containing nucleoside triphosphate hydrolases"/>
    <property type="match status" value="1"/>
</dbReference>
<accession>Q31UP5</accession>
<comment type="function">
    <text evidence="1">Component of the RavA-ViaA chaperone complex, which may act on the membrane to optimize the function of some of the respiratory chains. RavA functions as an ATPase.</text>
</comment>
<comment type="catalytic activity">
    <reaction evidence="1">
        <text>ATP + H2O = ADP + phosphate + H(+)</text>
        <dbReference type="Rhea" id="RHEA:13065"/>
        <dbReference type="ChEBI" id="CHEBI:15377"/>
        <dbReference type="ChEBI" id="CHEBI:15378"/>
        <dbReference type="ChEBI" id="CHEBI:30616"/>
        <dbReference type="ChEBI" id="CHEBI:43474"/>
        <dbReference type="ChEBI" id="CHEBI:456216"/>
    </reaction>
</comment>
<comment type="activity regulation">
    <text evidence="1">ATPase activity is stimulated by ViaA.</text>
</comment>
<comment type="subunit">
    <text evidence="1">Homohexamer. Interacts with ViaA.</text>
</comment>
<comment type="subcellular location">
    <subcellularLocation>
        <location evidence="1">Cytoplasm</location>
    </subcellularLocation>
</comment>
<comment type="similarity">
    <text evidence="1">Belongs to the RavA family.</text>
</comment>
<comment type="sequence caution" evidence="2">
    <conflict type="erroneous initiation">
        <sequence resource="EMBL-CDS" id="ABB68213"/>
    </conflict>
</comment>
<organism>
    <name type="scientific">Shigella boydii serotype 4 (strain Sb227)</name>
    <dbReference type="NCBI Taxonomy" id="300268"/>
    <lineage>
        <taxon>Bacteria</taxon>
        <taxon>Pseudomonadati</taxon>
        <taxon>Pseudomonadota</taxon>
        <taxon>Gammaproteobacteria</taxon>
        <taxon>Enterobacterales</taxon>
        <taxon>Enterobacteriaceae</taxon>
        <taxon>Shigella</taxon>
    </lineage>
</organism>
<protein>
    <recommendedName>
        <fullName evidence="1">Regulatory ATPase RavA</fullName>
        <ecNumber evidence="1">3.6.1.-</ecNumber>
    </recommendedName>
    <alternativeName>
        <fullName evidence="1">Regulatory ATPase variant A</fullName>
    </alternativeName>
</protein>
<keyword id="KW-0067">ATP-binding</keyword>
<keyword id="KW-0143">Chaperone</keyword>
<keyword id="KW-0963">Cytoplasm</keyword>
<keyword id="KW-0378">Hydrolase</keyword>
<keyword id="KW-0547">Nucleotide-binding</keyword>
<proteinExistence type="inferred from homology"/>
<gene>
    <name evidence="1" type="primary">ravA</name>
    <name type="ordered locus">SBO_3741</name>
</gene>
<feature type="chain" id="PRO_0000209378" description="Regulatory ATPase RavA">
    <location>
        <begin position="1"/>
        <end position="498"/>
    </location>
</feature>
<feature type="binding site" evidence="1">
    <location>
        <position position="23"/>
    </location>
    <ligand>
        <name>ADP</name>
        <dbReference type="ChEBI" id="CHEBI:456216"/>
    </ligand>
</feature>
<feature type="binding site" evidence="1">
    <location>
        <position position="49"/>
    </location>
    <ligand>
        <name>ADP</name>
        <dbReference type="ChEBI" id="CHEBI:456216"/>
    </ligand>
</feature>
<feature type="binding site" evidence="1">
    <location>
        <position position="50"/>
    </location>
    <ligand>
        <name>ADP</name>
        <dbReference type="ChEBI" id="CHEBI:456216"/>
    </ligand>
</feature>
<feature type="binding site" evidence="1">
    <location>
        <position position="51"/>
    </location>
    <ligand>
        <name>ADP</name>
        <dbReference type="ChEBI" id="CHEBI:456216"/>
    </ligand>
</feature>
<feature type="binding site" evidence="1">
    <location>
        <position position="52"/>
    </location>
    <ligand>
        <name>ADP</name>
        <dbReference type="ChEBI" id="CHEBI:456216"/>
    </ligand>
</feature>
<feature type="binding site" evidence="1">
    <location>
        <position position="53"/>
    </location>
    <ligand>
        <name>ADP</name>
        <dbReference type="ChEBI" id="CHEBI:456216"/>
    </ligand>
</feature>
<feature type="binding site" evidence="1">
    <location>
        <position position="54"/>
    </location>
    <ligand>
        <name>ADP</name>
        <dbReference type="ChEBI" id="CHEBI:456216"/>
    </ligand>
</feature>
<feature type="binding site" evidence="1">
    <location>
        <position position="196"/>
    </location>
    <ligand>
        <name>ADP</name>
        <dbReference type="ChEBI" id="CHEBI:456216"/>
    </ligand>
</feature>
<sequence>MAHPHLLAERISRLSSSLEKGLYERSHAIRLCLLAALSGESVFLLGPPGIAKSLIARRLKFAFQNARAFEYLMTRFSTPEEVFGPLSIQALKDEGRYERLTSGYLPEAEIVFLDEIWKAGPAILNTLLTAINERQFRNGAHVEKIPMRLLVAASNELPEADSSLEALYDRMLIRLWLDKVQDKANFRSMLTSQQDENDNPVPDALQVTDEEYERWQKEIGEITLPDHVFELIFMLRQQLDKLPDAPYVSDRRWKKAIRLLQASAFFSGRSAVAPVDLILLKDCLWYDAQSLNLIQQQIDVLMTGHAWQQQGMLTRLGAIVQRHLQLQQQQSDKTALTVIRLGGIFSRRQQYQLPVNVTASTLTLLLQKPLKLHDMEVVHISFERSALEQWLSKGGEIRGKLNGIGFAQKLNLEVDSTQHLVVRDVSLQGSTLALPGSSAEGLPGEIKQQLEELESDWRKQHALFSEQQKCLFIPGDWLGRIEASLQDVGAQIRQAQQC</sequence>
<reference key="1">
    <citation type="journal article" date="2005" name="Nucleic Acids Res.">
        <title>Genome dynamics and diversity of Shigella species, the etiologic agents of bacillary dysentery.</title>
        <authorList>
            <person name="Yang F."/>
            <person name="Yang J."/>
            <person name="Zhang X."/>
            <person name="Chen L."/>
            <person name="Jiang Y."/>
            <person name="Yan Y."/>
            <person name="Tang X."/>
            <person name="Wang J."/>
            <person name="Xiong Z."/>
            <person name="Dong J."/>
            <person name="Xue Y."/>
            <person name="Zhu Y."/>
            <person name="Xu X."/>
            <person name="Sun L."/>
            <person name="Chen S."/>
            <person name="Nie H."/>
            <person name="Peng J."/>
            <person name="Xu J."/>
            <person name="Wang Y."/>
            <person name="Yuan Z."/>
            <person name="Wen Y."/>
            <person name="Yao Z."/>
            <person name="Shen Y."/>
            <person name="Qiang B."/>
            <person name="Hou Y."/>
            <person name="Yu J."/>
            <person name="Jin Q."/>
        </authorList>
    </citation>
    <scope>NUCLEOTIDE SEQUENCE [LARGE SCALE GENOMIC DNA]</scope>
    <source>
        <strain>Sb227</strain>
    </source>
</reference>